<protein>
    <recommendedName>
        <fullName>Interferon gamma</fullName>
        <shortName>IFN-gamma</shortName>
    </recommendedName>
</protein>
<organism>
    <name type="scientific">Phasianus colchicus colchicus</name>
    <name type="common">Black-necked pheasant</name>
    <dbReference type="NCBI Taxonomy" id="9057"/>
    <lineage>
        <taxon>Eukaryota</taxon>
        <taxon>Metazoa</taxon>
        <taxon>Chordata</taxon>
        <taxon>Craniata</taxon>
        <taxon>Vertebrata</taxon>
        <taxon>Euteleostomi</taxon>
        <taxon>Archelosauria</taxon>
        <taxon>Archosauria</taxon>
        <taxon>Dinosauria</taxon>
        <taxon>Saurischia</taxon>
        <taxon>Theropoda</taxon>
        <taxon>Coelurosauria</taxon>
        <taxon>Aves</taxon>
        <taxon>Neognathae</taxon>
        <taxon>Galloanserae</taxon>
        <taxon>Galliformes</taxon>
        <taxon>Phasianidae</taxon>
        <taxon>Phasianinae</taxon>
        <taxon>Phasianus</taxon>
    </lineage>
</organism>
<reference key="1">
    <citation type="submission" date="1997-08" db="EMBL/GenBank/DDBJ databases">
        <title>Avian interferon-gamma: cloning, sequencing and comparison of interferon-gamma genes from several different avian species.</title>
        <authorList>
            <person name="Kaiser P."/>
            <person name="Sonnemans D."/>
            <person name="Smith L.M."/>
        </authorList>
    </citation>
    <scope>NUCLEOTIDE SEQUENCE [GENOMIC DNA]</scope>
</reference>
<comment type="function">
    <text evidence="1">Produced by lymphocytes activated by specific antigens or mitogens. IFN-gamma, in addition to having antiviral activity, has important immunoregulatory functions. It is a potent activator of macrophages, it has antiproliferative effects on transformed cells and it can potentiate the antiviral and antitumor effects of the type I interferons (By similarity).</text>
</comment>
<comment type="subunit">
    <text evidence="1">Homodimer.</text>
</comment>
<comment type="subcellular location">
    <subcellularLocation>
        <location evidence="1">Secreted</location>
    </subcellularLocation>
</comment>
<comment type="similarity">
    <text evidence="3">Belongs to the type II (or gamma) interferon family.</text>
</comment>
<dbReference type="EMBL" id="AJ001289">
    <property type="protein sequence ID" value="CAA04649.1"/>
    <property type="molecule type" value="Genomic_DNA"/>
</dbReference>
<dbReference type="SMR" id="O57608"/>
<dbReference type="GlyCosmos" id="O57608">
    <property type="glycosylation" value="2 sites, No reported glycans"/>
</dbReference>
<dbReference type="GO" id="GO:0005615">
    <property type="term" value="C:extracellular space"/>
    <property type="evidence" value="ECO:0000250"/>
    <property type="project" value="AgBase"/>
</dbReference>
<dbReference type="GO" id="GO:0005125">
    <property type="term" value="F:cytokine activity"/>
    <property type="evidence" value="ECO:0007669"/>
    <property type="project" value="UniProtKB-KW"/>
</dbReference>
<dbReference type="GO" id="GO:0005133">
    <property type="term" value="F:type II interferon receptor binding"/>
    <property type="evidence" value="ECO:0007669"/>
    <property type="project" value="InterPro"/>
</dbReference>
<dbReference type="GO" id="GO:0002250">
    <property type="term" value="P:adaptive immune response"/>
    <property type="evidence" value="ECO:0007669"/>
    <property type="project" value="TreeGrafter"/>
</dbReference>
<dbReference type="GO" id="GO:0051607">
    <property type="term" value="P:defense response to virus"/>
    <property type="evidence" value="ECO:0007669"/>
    <property type="project" value="UniProtKB-KW"/>
</dbReference>
<dbReference type="GO" id="GO:0006959">
    <property type="term" value="P:humoral immune response"/>
    <property type="evidence" value="ECO:0007669"/>
    <property type="project" value="TreeGrafter"/>
</dbReference>
<dbReference type="GO" id="GO:0042116">
    <property type="term" value="P:macrophage activation"/>
    <property type="evidence" value="ECO:0000250"/>
    <property type="project" value="AgBase"/>
</dbReference>
<dbReference type="GO" id="GO:0070673">
    <property type="term" value="P:response to interleukin-18"/>
    <property type="evidence" value="ECO:0000250"/>
    <property type="project" value="AgBase"/>
</dbReference>
<dbReference type="FunFam" id="1.20.1250.10:FF:000007">
    <property type="entry name" value="Interferon gamma"/>
    <property type="match status" value="1"/>
</dbReference>
<dbReference type="Gene3D" id="1.20.1250.10">
    <property type="match status" value="1"/>
</dbReference>
<dbReference type="InterPro" id="IPR009079">
    <property type="entry name" value="4_helix_cytokine-like_core"/>
</dbReference>
<dbReference type="InterPro" id="IPR002069">
    <property type="entry name" value="Interferon_gamma"/>
</dbReference>
<dbReference type="PANTHER" id="PTHR11419">
    <property type="entry name" value="INTERFERON GAMMA"/>
    <property type="match status" value="1"/>
</dbReference>
<dbReference type="PANTHER" id="PTHR11419:SF0">
    <property type="entry name" value="INTERFERON GAMMA"/>
    <property type="match status" value="1"/>
</dbReference>
<dbReference type="Pfam" id="PF00714">
    <property type="entry name" value="IFN-gamma"/>
    <property type="match status" value="1"/>
</dbReference>
<dbReference type="PIRSF" id="PIRSF001936">
    <property type="entry name" value="IFN-gamma"/>
    <property type="match status" value="1"/>
</dbReference>
<dbReference type="SUPFAM" id="SSF47266">
    <property type="entry name" value="4-helical cytokines"/>
    <property type="match status" value="1"/>
</dbReference>
<name>IFNG_PHACO</name>
<accession>O57608</accession>
<keyword id="KW-0051">Antiviral defense</keyword>
<keyword id="KW-0202">Cytokine</keyword>
<keyword id="KW-0325">Glycoprotein</keyword>
<keyword id="KW-0341">Growth regulation</keyword>
<keyword id="KW-0964">Secreted</keyword>
<keyword id="KW-0732">Signal</keyword>
<evidence type="ECO:0000250" key="1"/>
<evidence type="ECO:0000255" key="2"/>
<evidence type="ECO:0000305" key="3"/>
<feature type="signal peptide" evidence="2">
    <location>
        <begin position="1"/>
        <end position="19"/>
    </location>
</feature>
<feature type="chain" id="PRO_0000016467" description="Interferon gamma">
    <location>
        <begin position="20"/>
        <end position="164"/>
    </location>
</feature>
<feature type="glycosylation site" description="N-linked (GlcNAc...) asparagine" evidence="2">
    <location>
        <position position="42"/>
    </location>
</feature>
<feature type="glycosylation site" description="N-linked (GlcNAc...) asparagine" evidence="2">
    <location>
        <position position="61"/>
    </location>
</feature>
<gene>
    <name type="primary">IFNG</name>
</gene>
<proteinExistence type="inferred from homology"/>
<sequence>MTCQTYNLFVLSVIMIYYGHTASSLNLVQLQDDIDKLKADFNSSHSDVADGGPIIVEKLKNWTERNEKRIILSQIVSMYLEMLENTDKSKPHIKHISEELYTLKNNLPDGVKKVKDIMDLAKLRMNDLRIQRKAANELFSVLQKLVDPPSSKRKRSQSQRKCNC</sequence>